<gene>
    <name type="primary">araR</name>
    <name type="ordered locus">BH1875</name>
</gene>
<feature type="chain" id="PRO_0000050618" description="Arabinose metabolism transcriptional repressor">
    <location>
        <begin position="1"/>
        <end position="375"/>
    </location>
</feature>
<feature type="domain" description="HTH gntR-type" evidence="2">
    <location>
        <begin position="1"/>
        <end position="70"/>
    </location>
</feature>
<feature type="DNA-binding region" description="H-T-H motif" evidence="2">
    <location>
        <begin position="30"/>
        <end position="49"/>
    </location>
</feature>
<reference key="1">
    <citation type="journal article" date="2000" name="Nucleic Acids Res.">
        <title>Complete genome sequence of the alkaliphilic bacterium Bacillus halodurans and genomic sequence comparison with Bacillus subtilis.</title>
        <authorList>
            <person name="Takami H."/>
            <person name="Nakasone K."/>
            <person name="Takaki Y."/>
            <person name="Maeno G."/>
            <person name="Sasaki R."/>
            <person name="Masui N."/>
            <person name="Fuji F."/>
            <person name="Hirama C."/>
            <person name="Nakamura Y."/>
            <person name="Ogasawara N."/>
            <person name="Kuhara S."/>
            <person name="Horikoshi K."/>
        </authorList>
    </citation>
    <scope>NUCLEOTIDE SEQUENCE [LARGE SCALE GENOMIC DNA]</scope>
    <source>
        <strain>ATCC BAA-125 / DSM 18197 / FERM 7344 / JCM 9153 / C-125</strain>
    </source>
</reference>
<accession>Q9KBQ0</accession>
<comment type="function">
    <text evidence="1">Transcriptional repressor of the arabinose utilization genes.</text>
</comment>
<comment type="subcellular location">
    <subcellularLocation>
        <location evidence="3">Cytoplasm</location>
    </subcellularLocation>
</comment>
<dbReference type="EMBL" id="BA000004">
    <property type="protein sequence ID" value="BAB05594.1"/>
    <property type="molecule type" value="Genomic_DNA"/>
</dbReference>
<dbReference type="PIR" id="C83884">
    <property type="entry name" value="C83884"/>
</dbReference>
<dbReference type="RefSeq" id="WP_010898036.1">
    <property type="nucleotide sequence ID" value="NC_002570.2"/>
</dbReference>
<dbReference type="SMR" id="Q9KBQ0"/>
<dbReference type="STRING" id="272558.gene:10727773"/>
<dbReference type="KEGG" id="bha:BH1875"/>
<dbReference type="eggNOG" id="COG1609">
    <property type="taxonomic scope" value="Bacteria"/>
</dbReference>
<dbReference type="HOGENOM" id="CLU_037628_15_0_9"/>
<dbReference type="OrthoDB" id="9813468at2"/>
<dbReference type="Proteomes" id="UP000001258">
    <property type="component" value="Chromosome"/>
</dbReference>
<dbReference type="GO" id="GO:0005737">
    <property type="term" value="C:cytoplasm"/>
    <property type="evidence" value="ECO:0007669"/>
    <property type="project" value="UniProtKB-SubCell"/>
</dbReference>
<dbReference type="GO" id="GO:0003700">
    <property type="term" value="F:DNA-binding transcription factor activity"/>
    <property type="evidence" value="ECO:0007669"/>
    <property type="project" value="InterPro"/>
</dbReference>
<dbReference type="GO" id="GO:0000976">
    <property type="term" value="F:transcription cis-regulatory region binding"/>
    <property type="evidence" value="ECO:0007669"/>
    <property type="project" value="TreeGrafter"/>
</dbReference>
<dbReference type="CDD" id="cd01541">
    <property type="entry name" value="PBP1_AraR"/>
    <property type="match status" value="1"/>
</dbReference>
<dbReference type="CDD" id="cd07377">
    <property type="entry name" value="WHTH_GntR"/>
    <property type="match status" value="1"/>
</dbReference>
<dbReference type="Gene3D" id="3.40.50.2300">
    <property type="match status" value="2"/>
</dbReference>
<dbReference type="Gene3D" id="1.10.10.10">
    <property type="entry name" value="Winged helix-like DNA-binding domain superfamily/Winged helix DNA-binding domain"/>
    <property type="match status" value="1"/>
</dbReference>
<dbReference type="InterPro" id="IPR033532">
    <property type="entry name" value="AraR_ligand_bind_dom"/>
</dbReference>
<dbReference type="InterPro" id="IPR046335">
    <property type="entry name" value="LacI/GalR-like_sensor"/>
</dbReference>
<dbReference type="InterPro" id="IPR028082">
    <property type="entry name" value="Peripla_BP_I"/>
</dbReference>
<dbReference type="InterPro" id="IPR000524">
    <property type="entry name" value="Tscrpt_reg_HTH_GntR"/>
</dbReference>
<dbReference type="InterPro" id="IPR036388">
    <property type="entry name" value="WH-like_DNA-bd_sf"/>
</dbReference>
<dbReference type="InterPro" id="IPR036390">
    <property type="entry name" value="WH_DNA-bd_sf"/>
</dbReference>
<dbReference type="PANTHER" id="PTHR30146:SF150">
    <property type="entry name" value="ARABINOSE METABOLISM TRANSCRIPTIONAL REPRESSOR"/>
    <property type="match status" value="1"/>
</dbReference>
<dbReference type="PANTHER" id="PTHR30146">
    <property type="entry name" value="LACI-RELATED TRANSCRIPTIONAL REPRESSOR"/>
    <property type="match status" value="1"/>
</dbReference>
<dbReference type="Pfam" id="PF00392">
    <property type="entry name" value="GntR"/>
    <property type="match status" value="1"/>
</dbReference>
<dbReference type="Pfam" id="PF13377">
    <property type="entry name" value="Peripla_BP_3"/>
    <property type="match status" value="1"/>
</dbReference>
<dbReference type="PRINTS" id="PR00035">
    <property type="entry name" value="HTHGNTR"/>
</dbReference>
<dbReference type="SMART" id="SM00345">
    <property type="entry name" value="HTH_GNTR"/>
    <property type="match status" value="1"/>
</dbReference>
<dbReference type="SUPFAM" id="SSF53822">
    <property type="entry name" value="Periplasmic binding protein-like I"/>
    <property type="match status" value="1"/>
</dbReference>
<dbReference type="SUPFAM" id="SSF46785">
    <property type="entry name" value="Winged helix' DNA-binding domain"/>
    <property type="match status" value="1"/>
</dbReference>
<dbReference type="PROSITE" id="PS50949">
    <property type="entry name" value="HTH_GNTR"/>
    <property type="match status" value="1"/>
</dbReference>
<proteinExistence type="inferred from homology"/>
<organism>
    <name type="scientific">Halalkalibacterium halodurans (strain ATCC BAA-125 / DSM 18197 / FERM 7344 / JCM 9153 / C-125)</name>
    <name type="common">Bacillus halodurans</name>
    <dbReference type="NCBI Taxonomy" id="272558"/>
    <lineage>
        <taxon>Bacteria</taxon>
        <taxon>Bacillati</taxon>
        <taxon>Bacillota</taxon>
        <taxon>Bacilli</taxon>
        <taxon>Bacillales</taxon>
        <taxon>Bacillaceae</taxon>
        <taxon>Halalkalibacterium (ex Joshi et al. 2022)</taxon>
    </lineage>
</organism>
<keyword id="KW-0963">Cytoplasm</keyword>
<keyword id="KW-0238">DNA-binding</keyword>
<keyword id="KW-1185">Reference proteome</keyword>
<keyword id="KW-0678">Repressor</keyword>
<keyword id="KW-0804">Transcription</keyword>
<keyword id="KW-0805">Transcription regulation</keyword>
<name>ARAR_HALH5</name>
<protein>
    <recommendedName>
        <fullName>Arabinose metabolism transcriptional repressor</fullName>
    </recommendedName>
</protein>
<evidence type="ECO:0000250" key="1"/>
<evidence type="ECO:0000255" key="2">
    <source>
        <dbReference type="PROSITE-ProRule" id="PRU00307"/>
    </source>
</evidence>
<evidence type="ECO:0000305" key="3"/>
<sequence length="375" mass="42747">METKYNFVKQQIKSKILEGIVLPHGKIGSENELMKEYNVSRHTVRKAIDELVNEGWVYRKQGAGTFCADRTDQKNPIGKAQRKNIALITTYLSEYIFPSIIRGAESILSEHGYQVTIFSTNNNHEQEKRALEAVLSQRFDGLIVEPTKSSIPNPNINYYLNLERQGIPYVMINAYYEELEPYFLGMDDVKGGYTQTKHLLDLGHEQIVGLFKNDDLQGAKRLKGFIKAHRERGIALNPQHIITYTTEQKNAKPLEELHRIFKDRSHRPTGIVCYNDELALKLLDVIREFDIRVPEELSVVGYDDSFLSVASEVKLTTIQHPKVEMGIDAAKLIISCIEQERKDRSADGEQSIIYEPKLVVRHSTAEAKSEKGVAK</sequence>